<proteinExistence type="inferred from homology"/>
<protein>
    <recommendedName>
        <fullName evidence="1">UDP-3-O-acylglucosamine N-acyltransferase</fullName>
        <ecNumber evidence="1">2.3.1.191</ecNumber>
    </recommendedName>
</protein>
<dbReference type="EC" id="2.3.1.191" evidence="1"/>
<dbReference type="EMBL" id="CP000733">
    <property type="protein sequence ID" value="ABS77137.1"/>
    <property type="molecule type" value="Genomic_DNA"/>
</dbReference>
<dbReference type="RefSeq" id="WP_005771660.1">
    <property type="nucleotide sequence ID" value="NC_009727.1"/>
</dbReference>
<dbReference type="SMR" id="A9KC34"/>
<dbReference type="KEGG" id="cbd:CBUD_0625"/>
<dbReference type="HOGENOM" id="CLU_049865_0_1_6"/>
<dbReference type="UniPathway" id="UPA00973"/>
<dbReference type="Proteomes" id="UP000008555">
    <property type="component" value="Chromosome"/>
</dbReference>
<dbReference type="GO" id="GO:0016020">
    <property type="term" value="C:membrane"/>
    <property type="evidence" value="ECO:0007669"/>
    <property type="project" value="GOC"/>
</dbReference>
<dbReference type="GO" id="GO:0016410">
    <property type="term" value="F:N-acyltransferase activity"/>
    <property type="evidence" value="ECO:0007669"/>
    <property type="project" value="InterPro"/>
</dbReference>
<dbReference type="GO" id="GO:0009245">
    <property type="term" value="P:lipid A biosynthetic process"/>
    <property type="evidence" value="ECO:0007669"/>
    <property type="project" value="UniProtKB-UniRule"/>
</dbReference>
<dbReference type="CDD" id="cd03352">
    <property type="entry name" value="LbH_LpxD"/>
    <property type="match status" value="1"/>
</dbReference>
<dbReference type="Gene3D" id="1.20.5.170">
    <property type="match status" value="1"/>
</dbReference>
<dbReference type="Gene3D" id="2.160.10.10">
    <property type="entry name" value="Hexapeptide repeat proteins"/>
    <property type="match status" value="1"/>
</dbReference>
<dbReference type="Gene3D" id="3.40.1390.10">
    <property type="entry name" value="MurE/MurF, N-terminal domain"/>
    <property type="match status" value="1"/>
</dbReference>
<dbReference type="HAMAP" id="MF_00523">
    <property type="entry name" value="LpxD"/>
    <property type="match status" value="1"/>
</dbReference>
<dbReference type="InterPro" id="IPR001451">
    <property type="entry name" value="Hexapep"/>
</dbReference>
<dbReference type="InterPro" id="IPR007691">
    <property type="entry name" value="LpxD"/>
</dbReference>
<dbReference type="InterPro" id="IPR011004">
    <property type="entry name" value="Trimer_LpxA-like_sf"/>
</dbReference>
<dbReference type="InterPro" id="IPR020573">
    <property type="entry name" value="UDP_GlcNAc_AcTrfase_non-rep"/>
</dbReference>
<dbReference type="NCBIfam" id="TIGR01853">
    <property type="entry name" value="lipid_A_lpxD"/>
    <property type="match status" value="1"/>
</dbReference>
<dbReference type="NCBIfam" id="NF002060">
    <property type="entry name" value="PRK00892.1"/>
    <property type="match status" value="1"/>
</dbReference>
<dbReference type="PANTHER" id="PTHR43378">
    <property type="entry name" value="UDP-3-O-ACYLGLUCOSAMINE N-ACYLTRANSFERASE"/>
    <property type="match status" value="1"/>
</dbReference>
<dbReference type="PANTHER" id="PTHR43378:SF2">
    <property type="entry name" value="UDP-3-O-ACYLGLUCOSAMINE N-ACYLTRANSFERASE 1, MITOCHONDRIAL-RELATED"/>
    <property type="match status" value="1"/>
</dbReference>
<dbReference type="Pfam" id="PF00132">
    <property type="entry name" value="Hexapep"/>
    <property type="match status" value="3"/>
</dbReference>
<dbReference type="Pfam" id="PF14602">
    <property type="entry name" value="Hexapep_2"/>
    <property type="match status" value="1"/>
</dbReference>
<dbReference type="Pfam" id="PF04613">
    <property type="entry name" value="LpxD"/>
    <property type="match status" value="1"/>
</dbReference>
<dbReference type="SUPFAM" id="SSF51161">
    <property type="entry name" value="Trimeric LpxA-like enzymes"/>
    <property type="match status" value="1"/>
</dbReference>
<name>LPXD_COXBN</name>
<keyword id="KW-0012">Acyltransferase</keyword>
<keyword id="KW-0441">Lipid A biosynthesis</keyword>
<keyword id="KW-0444">Lipid biosynthesis</keyword>
<keyword id="KW-0443">Lipid metabolism</keyword>
<keyword id="KW-0677">Repeat</keyword>
<keyword id="KW-0808">Transferase</keyword>
<reference key="1">
    <citation type="journal article" date="2009" name="Infect. Immun.">
        <title>Comparative genomics reveal extensive transposon-mediated genomic plasticity and diversity among potential effector proteins within the genus Coxiella.</title>
        <authorList>
            <person name="Beare P.A."/>
            <person name="Unsworth N."/>
            <person name="Andoh M."/>
            <person name="Voth D.E."/>
            <person name="Omsland A."/>
            <person name="Gilk S.D."/>
            <person name="Williams K.P."/>
            <person name="Sobral B.W."/>
            <person name="Kupko J.J. III"/>
            <person name="Porcella S.F."/>
            <person name="Samuel J.E."/>
            <person name="Heinzen R.A."/>
        </authorList>
    </citation>
    <scope>NUCLEOTIDE SEQUENCE [LARGE SCALE GENOMIC DNA]</scope>
    <source>
        <strain>Dugway 5J108-111</strain>
    </source>
</reference>
<sequence length="342" mass="36272">MTRGLTYSLTELATAIGATVQGDGDCKIHNVAAIAQAQPGEISFVTDRKYRKYLTQTKASAILLDEKLASRCPINALVMSNPKLGFAKLLTLLRPQSLPTGGIHPTAVVGANCQIDPSAHIGAHVVIEEDVVIGPRTLIGAGASIGRGSQIGSDCCLHSRVTLYSQTRIGDRSIIHSGAVIGADGFGLIQDEKGEWVKIPQVGRVIIGDDVEIGANATIDRGALDDTVIGNGVKIDDLVMIAHNVRIGDHTVIAGCAGVAGSTTVGRHCMIGASAGLNGHIEICDNVIITGMGMIQKSITKPGIYSSGTGMQTNREWRKSVIRFWQLDELAKRLKRLEKLIR</sequence>
<gene>
    <name evidence="1" type="primary">lpxD</name>
    <name type="ordered locus">CBUD_0625</name>
</gene>
<feature type="chain" id="PRO_1000081687" description="UDP-3-O-acylglucosamine N-acyltransferase">
    <location>
        <begin position="1"/>
        <end position="342"/>
    </location>
</feature>
<feature type="active site" description="Proton acceptor" evidence="1">
    <location>
        <position position="243"/>
    </location>
</feature>
<evidence type="ECO:0000255" key="1">
    <source>
        <dbReference type="HAMAP-Rule" id="MF_00523"/>
    </source>
</evidence>
<accession>A9KC34</accession>
<comment type="function">
    <text evidence="1">Catalyzes the N-acylation of UDP-3-O-acylglucosamine using 3-hydroxyacyl-ACP as the acyl donor. Is involved in the biosynthesis of lipid A, a phosphorylated glycolipid that anchors the lipopolysaccharide to the outer membrane of the cell.</text>
</comment>
<comment type="catalytic activity">
    <reaction evidence="1">
        <text>a UDP-3-O-[(3R)-3-hydroxyacyl]-alpha-D-glucosamine + a (3R)-hydroxyacyl-[ACP] = a UDP-2-N,3-O-bis[(3R)-3-hydroxyacyl]-alpha-D-glucosamine + holo-[ACP] + H(+)</text>
        <dbReference type="Rhea" id="RHEA:53836"/>
        <dbReference type="Rhea" id="RHEA-COMP:9685"/>
        <dbReference type="Rhea" id="RHEA-COMP:9945"/>
        <dbReference type="ChEBI" id="CHEBI:15378"/>
        <dbReference type="ChEBI" id="CHEBI:64479"/>
        <dbReference type="ChEBI" id="CHEBI:78827"/>
        <dbReference type="ChEBI" id="CHEBI:137740"/>
        <dbReference type="ChEBI" id="CHEBI:137748"/>
        <dbReference type="EC" id="2.3.1.191"/>
    </reaction>
</comment>
<comment type="pathway">
    <text evidence="1">Bacterial outer membrane biogenesis; LPS lipid A biosynthesis.</text>
</comment>
<comment type="subunit">
    <text evidence="1">Homotrimer.</text>
</comment>
<comment type="similarity">
    <text evidence="1">Belongs to the transferase hexapeptide repeat family. LpxD subfamily.</text>
</comment>
<organism>
    <name type="scientific">Coxiella burnetii (strain Dugway 5J108-111)</name>
    <dbReference type="NCBI Taxonomy" id="434922"/>
    <lineage>
        <taxon>Bacteria</taxon>
        <taxon>Pseudomonadati</taxon>
        <taxon>Pseudomonadota</taxon>
        <taxon>Gammaproteobacteria</taxon>
        <taxon>Legionellales</taxon>
        <taxon>Coxiellaceae</taxon>
        <taxon>Coxiella</taxon>
    </lineage>
</organism>